<comment type="function">
    <text evidence="1">Involved in the heme biosynthesis. Catalyzes the aerobic oxidative decarboxylation of propionate groups of rings A and B of coproporphyrinogen-III to yield the vinyl groups in protoporphyrinogen-IX.</text>
</comment>
<comment type="catalytic activity">
    <reaction evidence="1">
        <text>coproporphyrinogen III + O2 + 2 H(+) = protoporphyrinogen IX + 2 CO2 + 2 H2O</text>
        <dbReference type="Rhea" id="RHEA:18257"/>
        <dbReference type="ChEBI" id="CHEBI:15377"/>
        <dbReference type="ChEBI" id="CHEBI:15378"/>
        <dbReference type="ChEBI" id="CHEBI:15379"/>
        <dbReference type="ChEBI" id="CHEBI:16526"/>
        <dbReference type="ChEBI" id="CHEBI:57307"/>
        <dbReference type="ChEBI" id="CHEBI:57309"/>
        <dbReference type="EC" id="1.3.3.3"/>
    </reaction>
</comment>
<comment type="cofactor">
    <cofactor evidence="1">
        <name>a divalent metal cation</name>
        <dbReference type="ChEBI" id="CHEBI:60240"/>
    </cofactor>
</comment>
<comment type="pathway">
    <text evidence="1">Porphyrin-containing compound metabolism; protoporphyrin-IX biosynthesis; protoporphyrinogen-IX from coproporphyrinogen-III (O2 route): step 1/1.</text>
</comment>
<comment type="subunit">
    <text evidence="1">Homodimer.</text>
</comment>
<comment type="subcellular location">
    <subcellularLocation>
        <location evidence="1">Cytoplasm</location>
    </subcellularLocation>
</comment>
<comment type="similarity">
    <text evidence="1">Belongs to the aerobic coproporphyrinogen-III oxidase family.</text>
</comment>
<keyword id="KW-0963">Cytoplasm</keyword>
<keyword id="KW-0350">Heme biosynthesis</keyword>
<keyword id="KW-0479">Metal-binding</keyword>
<keyword id="KW-0560">Oxidoreductase</keyword>
<keyword id="KW-0627">Porphyrin biosynthesis</keyword>
<sequence>MTDTSDLDGKKATARAWFESLRDQICAEFERLEDEAPTDLYAGEPGRFVRKPWDREAGGGGVMSMMHGRLFEKVGVHVSTVFGTFTPEMAKNMPGADEDPRFFATGISLIAHMRSPRVPAVHMNTRFIATTKSWFGGGGDLTPLLGYQRQQDFPDAIDFHAAYQRACDAHDPTWHAKYKAWCDEYFFLPHRNEPRGIGGIFYDHHDSGDWAKDFAFTQDVGRAFLEIYPTLVRRRMGETWSAEEREQQLVQRGRYVEFNLLYDRGTMFGLKTGGNVESILSSMPPEVKWP</sequence>
<feature type="chain" id="PRO_1000079254" description="Oxygen-dependent coproporphyrinogen-III oxidase">
    <location>
        <begin position="1"/>
        <end position="290"/>
    </location>
</feature>
<feature type="region of interest" description="Important for dimerization" evidence="1">
    <location>
        <begin position="255"/>
        <end position="290"/>
    </location>
</feature>
<feature type="active site" description="Proton donor" evidence="1">
    <location>
        <position position="122"/>
    </location>
</feature>
<feature type="binding site" evidence="1">
    <location>
        <position position="108"/>
    </location>
    <ligand>
        <name>substrate</name>
    </ligand>
</feature>
<feature type="binding site" evidence="1">
    <location>
        <position position="112"/>
    </location>
    <ligand>
        <name>a divalent metal cation</name>
        <dbReference type="ChEBI" id="CHEBI:60240"/>
    </ligand>
</feature>
<feature type="binding site" evidence="1">
    <location>
        <position position="122"/>
    </location>
    <ligand>
        <name>a divalent metal cation</name>
        <dbReference type="ChEBI" id="CHEBI:60240"/>
    </ligand>
</feature>
<feature type="binding site" evidence="1">
    <location>
        <begin position="124"/>
        <end position="126"/>
    </location>
    <ligand>
        <name>substrate</name>
    </ligand>
</feature>
<feature type="binding site" evidence="1">
    <location>
        <position position="160"/>
    </location>
    <ligand>
        <name>a divalent metal cation</name>
        <dbReference type="ChEBI" id="CHEBI:60240"/>
    </ligand>
</feature>
<feature type="binding site" evidence="1">
    <location>
        <position position="190"/>
    </location>
    <ligand>
        <name>a divalent metal cation</name>
        <dbReference type="ChEBI" id="CHEBI:60240"/>
    </ligand>
</feature>
<feature type="binding site" evidence="1">
    <location>
        <begin position="273"/>
        <end position="275"/>
    </location>
    <ligand>
        <name>substrate</name>
    </ligand>
</feature>
<feature type="site" description="Important for dimerization" evidence="1">
    <location>
        <position position="190"/>
    </location>
</feature>
<protein>
    <recommendedName>
        <fullName evidence="1">Oxygen-dependent coproporphyrinogen-III oxidase</fullName>
        <shortName evidence="1">CPO</shortName>
        <shortName evidence="1">Coprogen oxidase</shortName>
        <shortName evidence="1">Coproporphyrinogenase</shortName>
        <ecNumber evidence="1">1.3.3.3</ecNumber>
    </recommendedName>
</protein>
<evidence type="ECO:0000255" key="1">
    <source>
        <dbReference type="HAMAP-Rule" id="MF_00333"/>
    </source>
</evidence>
<reference key="1">
    <citation type="submission" date="2008-01" db="EMBL/GenBank/DDBJ databases">
        <title>Complete sequence of chromosome of Caulobacter sp. K31.</title>
        <authorList>
            <consortium name="US DOE Joint Genome Institute"/>
            <person name="Copeland A."/>
            <person name="Lucas S."/>
            <person name="Lapidus A."/>
            <person name="Barry K."/>
            <person name="Glavina del Rio T."/>
            <person name="Dalin E."/>
            <person name="Tice H."/>
            <person name="Pitluck S."/>
            <person name="Bruce D."/>
            <person name="Goodwin L."/>
            <person name="Thompson L.S."/>
            <person name="Brettin T."/>
            <person name="Detter J.C."/>
            <person name="Han C."/>
            <person name="Schmutz J."/>
            <person name="Larimer F."/>
            <person name="Land M."/>
            <person name="Hauser L."/>
            <person name="Kyrpides N."/>
            <person name="Kim E."/>
            <person name="Stephens C."/>
            <person name="Richardson P."/>
        </authorList>
    </citation>
    <scope>NUCLEOTIDE SEQUENCE [LARGE SCALE GENOMIC DNA]</scope>
    <source>
        <strain>K31</strain>
    </source>
</reference>
<accession>B0T8D1</accession>
<name>HEM6_CAUSK</name>
<gene>
    <name evidence="1" type="primary">hemF</name>
    <name type="ordered locus">Caul_0699</name>
</gene>
<organism>
    <name type="scientific">Caulobacter sp. (strain K31)</name>
    <dbReference type="NCBI Taxonomy" id="366602"/>
    <lineage>
        <taxon>Bacteria</taxon>
        <taxon>Pseudomonadati</taxon>
        <taxon>Pseudomonadota</taxon>
        <taxon>Alphaproteobacteria</taxon>
        <taxon>Caulobacterales</taxon>
        <taxon>Caulobacteraceae</taxon>
        <taxon>Caulobacter</taxon>
    </lineage>
</organism>
<proteinExistence type="inferred from homology"/>
<dbReference type="EC" id="1.3.3.3" evidence="1"/>
<dbReference type="EMBL" id="CP000927">
    <property type="protein sequence ID" value="ABZ69832.1"/>
    <property type="molecule type" value="Genomic_DNA"/>
</dbReference>
<dbReference type="SMR" id="B0T8D1"/>
<dbReference type="STRING" id="366602.Caul_0699"/>
<dbReference type="KEGG" id="cak:Caul_0699"/>
<dbReference type="eggNOG" id="COG0408">
    <property type="taxonomic scope" value="Bacteria"/>
</dbReference>
<dbReference type="HOGENOM" id="CLU_026169_0_1_5"/>
<dbReference type="OrthoDB" id="9777553at2"/>
<dbReference type="UniPathway" id="UPA00251">
    <property type="reaction ID" value="UER00322"/>
</dbReference>
<dbReference type="GO" id="GO:0005737">
    <property type="term" value="C:cytoplasm"/>
    <property type="evidence" value="ECO:0007669"/>
    <property type="project" value="UniProtKB-SubCell"/>
</dbReference>
<dbReference type="GO" id="GO:0004109">
    <property type="term" value="F:coproporphyrinogen oxidase activity"/>
    <property type="evidence" value="ECO:0007669"/>
    <property type="project" value="UniProtKB-UniRule"/>
</dbReference>
<dbReference type="GO" id="GO:0046872">
    <property type="term" value="F:metal ion binding"/>
    <property type="evidence" value="ECO:0007669"/>
    <property type="project" value="UniProtKB-KW"/>
</dbReference>
<dbReference type="GO" id="GO:0042803">
    <property type="term" value="F:protein homodimerization activity"/>
    <property type="evidence" value="ECO:0000250"/>
    <property type="project" value="UniProtKB"/>
</dbReference>
<dbReference type="GO" id="GO:0006782">
    <property type="term" value="P:protoporphyrinogen IX biosynthetic process"/>
    <property type="evidence" value="ECO:0007669"/>
    <property type="project" value="UniProtKB-UniRule"/>
</dbReference>
<dbReference type="FunFam" id="3.40.1500.10:FF:000005">
    <property type="entry name" value="Oxygen-dependent coproporphyrinogen-III oxidase"/>
    <property type="match status" value="1"/>
</dbReference>
<dbReference type="Gene3D" id="3.40.1500.10">
    <property type="entry name" value="Coproporphyrinogen III oxidase, aerobic"/>
    <property type="match status" value="1"/>
</dbReference>
<dbReference type="HAMAP" id="MF_00333">
    <property type="entry name" value="Coprogen_oxidas"/>
    <property type="match status" value="1"/>
</dbReference>
<dbReference type="InterPro" id="IPR001260">
    <property type="entry name" value="Coprogen_oxidase_aer"/>
</dbReference>
<dbReference type="InterPro" id="IPR036406">
    <property type="entry name" value="Coprogen_oxidase_aer_sf"/>
</dbReference>
<dbReference type="InterPro" id="IPR018375">
    <property type="entry name" value="Coprogen_oxidase_CS"/>
</dbReference>
<dbReference type="NCBIfam" id="NF003727">
    <property type="entry name" value="PRK05330.1"/>
    <property type="match status" value="1"/>
</dbReference>
<dbReference type="PANTHER" id="PTHR10755">
    <property type="entry name" value="COPROPORPHYRINOGEN III OXIDASE, MITOCHONDRIAL"/>
    <property type="match status" value="1"/>
</dbReference>
<dbReference type="PANTHER" id="PTHR10755:SF0">
    <property type="entry name" value="OXYGEN-DEPENDENT COPROPORPHYRINOGEN-III OXIDASE, MITOCHONDRIAL"/>
    <property type="match status" value="1"/>
</dbReference>
<dbReference type="Pfam" id="PF01218">
    <property type="entry name" value="Coprogen_oxidas"/>
    <property type="match status" value="1"/>
</dbReference>
<dbReference type="PIRSF" id="PIRSF000166">
    <property type="entry name" value="Coproporphyri_ox"/>
    <property type="match status" value="1"/>
</dbReference>
<dbReference type="PRINTS" id="PR00073">
    <property type="entry name" value="COPRGNOXDASE"/>
</dbReference>
<dbReference type="SUPFAM" id="SSF102886">
    <property type="entry name" value="Coproporphyrinogen III oxidase"/>
    <property type="match status" value="1"/>
</dbReference>
<dbReference type="PROSITE" id="PS01021">
    <property type="entry name" value="COPROGEN_OXIDASE"/>
    <property type="match status" value="1"/>
</dbReference>